<gene>
    <name type="primary">FAM170A</name>
    <name type="synonym">ZNFD</name>
</gene>
<keyword id="KW-0010">Activator</keyword>
<keyword id="KW-0238">DNA-binding</keyword>
<keyword id="KW-0479">Metal-binding</keyword>
<keyword id="KW-0539">Nucleus</keyword>
<keyword id="KW-0597">Phosphoprotein</keyword>
<keyword id="KW-1185">Reference proteome</keyword>
<keyword id="KW-0804">Transcription</keyword>
<keyword id="KW-0805">Transcription regulation</keyword>
<keyword id="KW-0862">Zinc</keyword>
<keyword id="KW-0863">Zinc-finger</keyword>
<protein>
    <recommendedName>
        <fullName>Protein FAM170A</fullName>
    </recommendedName>
    <alternativeName>
        <fullName>Zinc finger domain-containing protein</fullName>
    </alternativeName>
    <alternativeName>
        <fullName>Zinc finger protein ZNFD</fullName>
    </alternativeName>
</protein>
<organism>
    <name type="scientific">Macaca fascicularis</name>
    <name type="common">Crab-eating macaque</name>
    <name type="synonym">Cynomolgus monkey</name>
    <dbReference type="NCBI Taxonomy" id="9541"/>
    <lineage>
        <taxon>Eukaryota</taxon>
        <taxon>Metazoa</taxon>
        <taxon>Chordata</taxon>
        <taxon>Craniata</taxon>
        <taxon>Vertebrata</taxon>
        <taxon>Euteleostomi</taxon>
        <taxon>Mammalia</taxon>
        <taxon>Eutheria</taxon>
        <taxon>Euarchontoglires</taxon>
        <taxon>Primates</taxon>
        <taxon>Haplorrhini</taxon>
        <taxon>Catarrhini</taxon>
        <taxon>Cercopithecidae</taxon>
        <taxon>Cercopithecinae</taxon>
        <taxon>Macaca</taxon>
    </lineage>
</organism>
<proteinExistence type="evidence at transcript level"/>
<comment type="function">
    <text evidence="1">Acts as a nuclear transcription factor that positively regulates the expression of heat shock genes. Binds to heat shock promoter elements (HSE) (By similarity).</text>
</comment>
<comment type="subcellular location">
    <subcellularLocation>
        <location evidence="1">Nucleus</location>
    </subcellularLocation>
</comment>
<comment type="domain">
    <text evidence="1">The N-terminus is necessary for nuclear localization. The C-terminus is necessary for transcriptional activity (By similarity).</text>
</comment>
<comment type="similarity">
    <text evidence="4">Belongs to the FAM170 family.</text>
</comment>
<accession>Q66LM5</accession>
<sequence length="283" mass="32263">MKRRQKRKHLENEESQETAEKGGGIQRIHRDSPQPQSPLAQVQERGETPPRSQHVSLSFHSSYKTCVSSLCVNKEERGMKIYYMQVQMNKGVAVSWETEETLESLEKQPRMEEVTLSEVVRVGTPPSDVSTRNLLSDSEPSGEEKEHEERTESDSLPGSPTVEDTPRAKTPDWLVTMENGFRCMACCRVFTTMEALQEHVQFGIREGFSCHVFHLTMAQLTGNMESESTQDEQEEENGNEKEEEEKPEAKEEEGQPTEEDLGLRRSWSQCPGCVFHSPKDRNS</sequence>
<name>F170A_MACFA</name>
<feature type="chain" id="PRO_0000326111" description="Protein FAM170A">
    <location>
        <begin position="1"/>
        <end position="283"/>
    </location>
</feature>
<feature type="zinc finger region" description="C2H2-type; degenerate">
    <location>
        <begin position="181"/>
        <end position="205"/>
    </location>
</feature>
<feature type="region of interest" description="Disordered" evidence="3">
    <location>
        <begin position="1"/>
        <end position="54"/>
    </location>
</feature>
<feature type="region of interest" description="Disordered" evidence="3">
    <location>
        <begin position="123"/>
        <end position="171"/>
    </location>
</feature>
<feature type="region of interest" description="Disordered" evidence="3">
    <location>
        <begin position="223"/>
        <end position="283"/>
    </location>
</feature>
<feature type="compositionally biased region" description="Polar residues" evidence="3">
    <location>
        <begin position="127"/>
        <end position="138"/>
    </location>
</feature>
<feature type="compositionally biased region" description="Basic and acidic residues" evidence="3">
    <location>
        <begin position="142"/>
        <end position="153"/>
    </location>
</feature>
<feature type="compositionally biased region" description="Acidic residues" evidence="3">
    <location>
        <begin position="228"/>
        <end position="246"/>
    </location>
</feature>
<feature type="modified residue" description="Phosphothreonine" evidence="2">
    <location>
        <position position="170"/>
    </location>
</feature>
<feature type="modified residue" description="Phosphoserine" evidence="2">
    <location>
        <position position="268"/>
    </location>
</feature>
<reference key="1">
    <citation type="submission" date="2004-07" db="EMBL/GenBank/DDBJ databases">
        <authorList>
            <person name="Huang C.Q."/>
            <person name="Liu S."/>
            <person name="Zhai Q.T."/>
        </authorList>
    </citation>
    <scope>NUCLEOTIDE SEQUENCE [MRNA]</scope>
</reference>
<dbReference type="EMBL" id="AY692450">
    <property type="protein sequence ID" value="AAU04858.1"/>
    <property type="molecule type" value="mRNA"/>
</dbReference>
<dbReference type="STRING" id="9541.ENSMFAP00000016656"/>
<dbReference type="Proteomes" id="UP000233100">
    <property type="component" value="Unplaced"/>
</dbReference>
<dbReference type="GO" id="GO:0005634">
    <property type="term" value="C:nucleus"/>
    <property type="evidence" value="ECO:0000250"/>
    <property type="project" value="UniProtKB"/>
</dbReference>
<dbReference type="GO" id="GO:0003677">
    <property type="term" value="F:DNA binding"/>
    <property type="evidence" value="ECO:0007669"/>
    <property type="project" value="UniProtKB-KW"/>
</dbReference>
<dbReference type="GO" id="GO:0008270">
    <property type="term" value="F:zinc ion binding"/>
    <property type="evidence" value="ECO:0007669"/>
    <property type="project" value="UniProtKB-KW"/>
</dbReference>
<dbReference type="GO" id="GO:0009566">
    <property type="term" value="P:fertilization"/>
    <property type="evidence" value="ECO:0007669"/>
    <property type="project" value="TreeGrafter"/>
</dbReference>
<dbReference type="GO" id="GO:0045893">
    <property type="term" value="P:positive regulation of DNA-templated transcription"/>
    <property type="evidence" value="ECO:0000250"/>
    <property type="project" value="UniProtKB"/>
</dbReference>
<dbReference type="GO" id="GO:0006366">
    <property type="term" value="P:transcription by RNA polymerase II"/>
    <property type="evidence" value="ECO:0000250"/>
    <property type="project" value="UniProtKB"/>
</dbReference>
<dbReference type="InterPro" id="IPR040879">
    <property type="entry name" value="Spt46-like"/>
</dbReference>
<dbReference type="PANTHER" id="PTHR33517:SF3">
    <property type="entry name" value="PROTEIN FAM170A"/>
    <property type="match status" value="1"/>
</dbReference>
<dbReference type="PANTHER" id="PTHR33517">
    <property type="entry name" value="PROTEIN FAM170B-RELATED"/>
    <property type="match status" value="1"/>
</dbReference>
<dbReference type="Pfam" id="PF17734">
    <property type="entry name" value="Spt46"/>
    <property type="match status" value="1"/>
</dbReference>
<evidence type="ECO:0000250" key="1"/>
<evidence type="ECO:0000250" key="2">
    <source>
        <dbReference type="UniProtKB" id="Q66LM6"/>
    </source>
</evidence>
<evidence type="ECO:0000256" key="3">
    <source>
        <dbReference type="SAM" id="MobiDB-lite"/>
    </source>
</evidence>
<evidence type="ECO:0000305" key="4"/>